<accession>A7H476</accession>
<keyword id="KW-0067">ATP-binding</keyword>
<keyword id="KW-0418">Kinase</keyword>
<keyword id="KW-0545">Nucleotide biosynthesis</keyword>
<keyword id="KW-0547">Nucleotide-binding</keyword>
<keyword id="KW-0808">Transferase</keyword>
<reference key="1">
    <citation type="submission" date="2007-07" db="EMBL/GenBank/DDBJ databases">
        <title>Complete genome sequence of Campylobacter jejuni subsp doylei 269.97 isolated from human blood.</title>
        <authorList>
            <person name="Fouts D.E."/>
            <person name="Mongodin E.F."/>
            <person name="Puiu D."/>
            <person name="Sebastian Y."/>
            <person name="Miller W.G."/>
            <person name="Mandrell R.E."/>
            <person name="Lastovica A.J."/>
            <person name="Nelson K.E."/>
        </authorList>
    </citation>
    <scope>NUCLEOTIDE SEQUENCE [LARGE SCALE GENOMIC DNA]</scope>
    <source>
        <strain>ATCC BAA-1458 / RM4099 / 269.97</strain>
    </source>
</reference>
<proteinExistence type="inferred from homology"/>
<organism>
    <name type="scientific">Campylobacter jejuni subsp. doylei (strain ATCC BAA-1458 / RM4099 / 269.97)</name>
    <dbReference type="NCBI Taxonomy" id="360109"/>
    <lineage>
        <taxon>Bacteria</taxon>
        <taxon>Pseudomonadati</taxon>
        <taxon>Campylobacterota</taxon>
        <taxon>Epsilonproteobacteria</taxon>
        <taxon>Campylobacterales</taxon>
        <taxon>Campylobacteraceae</taxon>
        <taxon>Campylobacter</taxon>
    </lineage>
</organism>
<feature type="chain" id="PRO_1000023170" description="Thymidylate kinase">
    <location>
        <begin position="1"/>
        <end position="192"/>
    </location>
</feature>
<feature type="binding site" evidence="1">
    <location>
        <begin position="7"/>
        <end position="14"/>
    </location>
    <ligand>
        <name>ATP</name>
        <dbReference type="ChEBI" id="CHEBI:30616"/>
    </ligand>
</feature>
<dbReference type="EC" id="2.7.4.9" evidence="1"/>
<dbReference type="EMBL" id="CP000768">
    <property type="protein sequence ID" value="ABS43298.1"/>
    <property type="molecule type" value="Genomic_DNA"/>
</dbReference>
<dbReference type="SMR" id="A7H476"/>
<dbReference type="KEGG" id="cjd:JJD26997_1246"/>
<dbReference type="HOGENOM" id="CLU_049131_0_0_7"/>
<dbReference type="Proteomes" id="UP000002302">
    <property type="component" value="Chromosome"/>
</dbReference>
<dbReference type="GO" id="GO:0005829">
    <property type="term" value="C:cytosol"/>
    <property type="evidence" value="ECO:0007669"/>
    <property type="project" value="TreeGrafter"/>
</dbReference>
<dbReference type="GO" id="GO:0005524">
    <property type="term" value="F:ATP binding"/>
    <property type="evidence" value="ECO:0007669"/>
    <property type="project" value="UniProtKB-UniRule"/>
</dbReference>
<dbReference type="GO" id="GO:0004798">
    <property type="term" value="F:dTMP kinase activity"/>
    <property type="evidence" value="ECO:0007669"/>
    <property type="project" value="UniProtKB-UniRule"/>
</dbReference>
<dbReference type="GO" id="GO:0006233">
    <property type="term" value="P:dTDP biosynthetic process"/>
    <property type="evidence" value="ECO:0007669"/>
    <property type="project" value="InterPro"/>
</dbReference>
<dbReference type="GO" id="GO:0006235">
    <property type="term" value="P:dTTP biosynthetic process"/>
    <property type="evidence" value="ECO:0007669"/>
    <property type="project" value="UniProtKB-UniRule"/>
</dbReference>
<dbReference type="GO" id="GO:0006227">
    <property type="term" value="P:dUDP biosynthetic process"/>
    <property type="evidence" value="ECO:0007669"/>
    <property type="project" value="TreeGrafter"/>
</dbReference>
<dbReference type="CDD" id="cd01672">
    <property type="entry name" value="TMPK"/>
    <property type="match status" value="1"/>
</dbReference>
<dbReference type="Gene3D" id="3.40.50.300">
    <property type="entry name" value="P-loop containing nucleotide triphosphate hydrolases"/>
    <property type="match status" value="1"/>
</dbReference>
<dbReference type="HAMAP" id="MF_00165">
    <property type="entry name" value="Thymidylate_kinase"/>
    <property type="match status" value="1"/>
</dbReference>
<dbReference type="InterPro" id="IPR027417">
    <property type="entry name" value="P-loop_NTPase"/>
</dbReference>
<dbReference type="InterPro" id="IPR039430">
    <property type="entry name" value="Thymidylate_kin-like_dom"/>
</dbReference>
<dbReference type="InterPro" id="IPR018094">
    <property type="entry name" value="Thymidylate_kinase"/>
</dbReference>
<dbReference type="NCBIfam" id="TIGR00041">
    <property type="entry name" value="DTMP_kinase"/>
    <property type="match status" value="1"/>
</dbReference>
<dbReference type="PANTHER" id="PTHR10344">
    <property type="entry name" value="THYMIDYLATE KINASE"/>
    <property type="match status" value="1"/>
</dbReference>
<dbReference type="PANTHER" id="PTHR10344:SF4">
    <property type="entry name" value="UMP-CMP KINASE 2, MITOCHONDRIAL"/>
    <property type="match status" value="1"/>
</dbReference>
<dbReference type="Pfam" id="PF02223">
    <property type="entry name" value="Thymidylate_kin"/>
    <property type="match status" value="1"/>
</dbReference>
<dbReference type="SUPFAM" id="SSF52540">
    <property type="entry name" value="P-loop containing nucleoside triphosphate hydrolases"/>
    <property type="match status" value="1"/>
</dbReference>
<dbReference type="PROSITE" id="PS01331">
    <property type="entry name" value="THYMIDYLATE_KINASE"/>
    <property type="match status" value="1"/>
</dbReference>
<sequence length="192" mass="22350">MYVVFEGIDCVGKSTQISLLKEIYKDAIFTLEPGGTELGKHLREILLNKTHPISKRAELLLFLADRAQHFEEILKTNQNKLIISDRSFISGMAYAKDFENDLLFTLNSFALEDFFPQKIIFLKGDENLIQERLSQKELDSIEKRGIEYFLSVQDKLKKVLHFLKEKISIEILTLDAKESKEKLHQQIKEFLQ</sequence>
<protein>
    <recommendedName>
        <fullName evidence="1">Thymidylate kinase</fullName>
        <ecNumber evidence="1">2.7.4.9</ecNumber>
    </recommendedName>
    <alternativeName>
        <fullName evidence="1">dTMP kinase</fullName>
    </alternativeName>
</protein>
<comment type="function">
    <text evidence="1">Phosphorylation of dTMP to form dTDP in both de novo and salvage pathways of dTTP synthesis.</text>
</comment>
<comment type="catalytic activity">
    <reaction evidence="1">
        <text>dTMP + ATP = dTDP + ADP</text>
        <dbReference type="Rhea" id="RHEA:13517"/>
        <dbReference type="ChEBI" id="CHEBI:30616"/>
        <dbReference type="ChEBI" id="CHEBI:58369"/>
        <dbReference type="ChEBI" id="CHEBI:63528"/>
        <dbReference type="ChEBI" id="CHEBI:456216"/>
        <dbReference type="EC" id="2.7.4.9"/>
    </reaction>
</comment>
<comment type="similarity">
    <text evidence="1">Belongs to the thymidylate kinase family.</text>
</comment>
<evidence type="ECO:0000255" key="1">
    <source>
        <dbReference type="HAMAP-Rule" id="MF_00165"/>
    </source>
</evidence>
<name>KTHY_CAMJD</name>
<gene>
    <name evidence="1" type="primary">tmk</name>
    <name type="ordered locus">JJD26997_1246</name>
</gene>